<feature type="chain" id="PRO_0000179229" description="UDP-N-acetylenolpyruvoylglucosamine reductase">
    <location>
        <begin position="1"/>
        <end position="367"/>
    </location>
</feature>
<feature type="domain" description="FAD-binding PCMH-type">
    <location>
        <begin position="29"/>
        <end position="205"/>
    </location>
</feature>
<feature type="active site" evidence="1">
    <location>
        <position position="177"/>
    </location>
</feature>
<feature type="active site" description="Proton donor" evidence="1">
    <location>
        <position position="260"/>
    </location>
</feature>
<feature type="active site" evidence="1">
    <location>
        <position position="359"/>
    </location>
</feature>
<keyword id="KW-0131">Cell cycle</keyword>
<keyword id="KW-0132">Cell division</keyword>
<keyword id="KW-0133">Cell shape</keyword>
<keyword id="KW-0961">Cell wall biogenesis/degradation</keyword>
<keyword id="KW-0963">Cytoplasm</keyword>
<keyword id="KW-0274">FAD</keyword>
<keyword id="KW-0285">Flavoprotein</keyword>
<keyword id="KW-0521">NADP</keyword>
<keyword id="KW-0560">Oxidoreductase</keyword>
<keyword id="KW-0573">Peptidoglycan synthesis</keyword>
<keyword id="KW-1185">Reference proteome</keyword>
<dbReference type="EC" id="1.3.1.98"/>
<dbReference type="EMBL" id="AL583925">
    <property type="protein sequence ID" value="CAC31964.1"/>
    <property type="molecule type" value="Genomic_DNA"/>
</dbReference>
<dbReference type="PIR" id="D87215">
    <property type="entry name" value="D87215"/>
</dbReference>
<dbReference type="RefSeq" id="NP_302586.1">
    <property type="nucleotide sequence ID" value="NC_002677.1"/>
</dbReference>
<dbReference type="RefSeq" id="WP_010908905.1">
    <property type="nucleotide sequence ID" value="NC_002677.1"/>
</dbReference>
<dbReference type="SMR" id="Q9CB48"/>
<dbReference type="STRING" id="272631.gene:17576310"/>
<dbReference type="KEGG" id="mle:ML2447"/>
<dbReference type="PATRIC" id="fig|272631.5.peg.4701"/>
<dbReference type="Leproma" id="ML2447"/>
<dbReference type="eggNOG" id="COG0812">
    <property type="taxonomic scope" value="Bacteria"/>
</dbReference>
<dbReference type="HOGENOM" id="CLU_035304_0_1_11"/>
<dbReference type="OrthoDB" id="9804753at2"/>
<dbReference type="UniPathway" id="UPA00219"/>
<dbReference type="Proteomes" id="UP000000806">
    <property type="component" value="Chromosome"/>
</dbReference>
<dbReference type="GO" id="GO:0005829">
    <property type="term" value="C:cytosol"/>
    <property type="evidence" value="ECO:0007669"/>
    <property type="project" value="TreeGrafter"/>
</dbReference>
<dbReference type="GO" id="GO:0071949">
    <property type="term" value="F:FAD binding"/>
    <property type="evidence" value="ECO:0007669"/>
    <property type="project" value="InterPro"/>
</dbReference>
<dbReference type="GO" id="GO:0008762">
    <property type="term" value="F:UDP-N-acetylmuramate dehydrogenase activity"/>
    <property type="evidence" value="ECO:0007669"/>
    <property type="project" value="UniProtKB-UniRule"/>
</dbReference>
<dbReference type="GO" id="GO:0051301">
    <property type="term" value="P:cell division"/>
    <property type="evidence" value="ECO:0007669"/>
    <property type="project" value="UniProtKB-KW"/>
</dbReference>
<dbReference type="GO" id="GO:0071555">
    <property type="term" value="P:cell wall organization"/>
    <property type="evidence" value="ECO:0007669"/>
    <property type="project" value="UniProtKB-KW"/>
</dbReference>
<dbReference type="GO" id="GO:0009252">
    <property type="term" value="P:peptidoglycan biosynthetic process"/>
    <property type="evidence" value="ECO:0007669"/>
    <property type="project" value="UniProtKB-UniRule"/>
</dbReference>
<dbReference type="GO" id="GO:0008360">
    <property type="term" value="P:regulation of cell shape"/>
    <property type="evidence" value="ECO:0007669"/>
    <property type="project" value="UniProtKB-KW"/>
</dbReference>
<dbReference type="Gene3D" id="3.30.465.10">
    <property type="match status" value="1"/>
</dbReference>
<dbReference type="Gene3D" id="3.90.78.10">
    <property type="entry name" value="UDP-N-acetylenolpyruvoylglucosamine reductase, C-terminal domain"/>
    <property type="match status" value="1"/>
</dbReference>
<dbReference type="Gene3D" id="3.30.43.10">
    <property type="entry name" value="Uridine Diphospho-n-acetylenolpyruvylglucosamine Reductase, domain 2"/>
    <property type="match status" value="1"/>
</dbReference>
<dbReference type="HAMAP" id="MF_00037">
    <property type="entry name" value="MurB"/>
    <property type="match status" value="1"/>
</dbReference>
<dbReference type="InterPro" id="IPR016166">
    <property type="entry name" value="FAD-bd_PCMH"/>
</dbReference>
<dbReference type="InterPro" id="IPR036318">
    <property type="entry name" value="FAD-bd_PCMH-like_sf"/>
</dbReference>
<dbReference type="InterPro" id="IPR016167">
    <property type="entry name" value="FAD-bd_PCMH_sub1"/>
</dbReference>
<dbReference type="InterPro" id="IPR016169">
    <property type="entry name" value="FAD-bd_PCMH_sub2"/>
</dbReference>
<dbReference type="InterPro" id="IPR003170">
    <property type="entry name" value="MurB"/>
</dbReference>
<dbReference type="InterPro" id="IPR011601">
    <property type="entry name" value="MurB_C"/>
</dbReference>
<dbReference type="InterPro" id="IPR036635">
    <property type="entry name" value="MurB_C_sf"/>
</dbReference>
<dbReference type="InterPro" id="IPR006094">
    <property type="entry name" value="Oxid_FAD_bind_N"/>
</dbReference>
<dbReference type="NCBIfam" id="TIGR00179">
    <property type="entry name" value="murB"/>
    <property type="match status" value="1"/>
</dbReference>
<dbReference type="NCBIfam" id="NF010478">
    <property type="entry name" value="PRK13903.1"/>
    <property type="match status" value="1"/>
</dbReference>
<dbReference type="PANTHER" id="PTHR21071">
    <property type="entry name" value="UDP-N-ACETYLENOLPYRUVOYLGLUCOSAMINE REDUCTASE"/>
    <property type="match status" value="1"/>
</dbReference>
<dbReference type="PANTHER" id="PTHR21071:SF4">
    <property type="entry name" value="UDP-N-ACETYLENOLPYRUVOYLGLUCOSAMINE REDUCTASE"/>
    <property type="match status" value="1"/>
</dbReference>
<dbReference type="Pfam" id="PF01565">
    <property type="entry name" value="FAD_binding_4"/>
    <property type="match status" value="1"/>
</dbReference>
<dbReference type="Pfam" id="PF02873">
    <property type="entry name" value="MurB_C"/>
    <property type="match status" value="1"/>
</dbReference>
<dbReference type="SUPFAM" id="SSF56176">
    <property type="entry name" value="FAD-binding/transporter-associated domain-like"/>
    <property type="match status" value="1"/>
</dbReference>
<dbReference type="SUPFAM" id="SSF56194">
    <property type="entry name" value="Uridine diphospho-N-Acetylenolpyruvylglucosamine reductase, MurB, C-terminal domain"/>
    <property type="match status" value="1"/>
</dbReference>
<dbReference type="PROSITE" id="PS51387">
    <property type="entry name" value="FAD_PCMH"/>
    <property type="match status" value="1"/>
</dbReference>
<evidence type="ECO:0000250" key="1"/>
<evidence type="ECO:0000305" key="2"/>
<protein>
    <recommendedName>
        <fullName>UDP-N-acetylenolpyruvoylglucosamine reductase</fullName>
        <ecNumber>1.3.1.98</ecNumber>
    </recommendedName>
    <alternativeName>
        <fullName>UDP-N-acetylmuramate dehydrogenase</fullName>
    </alternativeName>
</protein>
<sequence length="367" mass="38112">MKRSAVGSFFAGAHVAEAVSLAPLTTLRVGPVAQRVITCASTEQVVDVIRQLDAPAGGRGAGPLLIFAGGSNLVIADTLADLTAVRLANAGITIDGNLVRAEAGAVWDDVVVRAIEHGLGGLECLSGIPGSAGATPVQNVGAYGAEVSDTITRVRLLERSSGSVRWVSACELRFGYRTSVFKQADPSGSQPPAVVLEVEFKLDASGQSAPLHYGELVATLDATSGQRANPHAVREAVLALRVRKGMVLDAADHDTWSVGSFFTNPVVAPDVYRQLAKMVDGPVPHYPAQDGVKLAAGWLVERAGFGKGYPDGAAPCRLSTKHVLALTNRGAATAEDVVTLARTVRNGVLEVFGITLEPEPALVGCVL</sequence>
<gene>
    <name type="primary">murB</name>
    <name type="ordered locus">ML2447</name>
</gene>
<accession>Q9CB48</accession>
<name>MURB_MYCLE</name>
<reference key="1">
    <citation type="journal article" date="2001" name="Nature">
        <title>Massive gene decay in the leprosy bacillus.</title>
        <authorList>
            <person name="Cole S.T."/>
            <person name="Eiglmeier K."/>
            <person name="Parkhill J."/>
            <person name="James K.D."/>
            <person name="Thomson N.R."/>
            <person name="Wheeler P.R."/>
            <person name="Honore N."/>
            <person name="Garnier T."/>
            <person name="Churcher C.M."/>
            <person name="Harris D.E."/>
            <person name="Mungall K.L."/>
            <person name="Basham D."/>
            <person name="Brown D."/>
            <person name="Chillingworth T."/>
            <person name="Connor R."/>
            <person name="Davies R.M."/>
            <person name="Devlin K."/>
            <person name="Duthoy S."/>
            <person name="Feltwell T."/>
            <person name="Fraser A."/>
            <person name="Hamlin N."/>
            <person name="Holroyd S."/>
            <person name="Hornsby T."/>
            <person name="Jagels K."/>
            <person name="Lacroix C."/>
            <person name="Maclean J."/>
            <person name="Moule S."/>
            <person name="Murphy L.D."/>
            <person name="Oliver K."/>
            <person name="Quail M.A."/>
            <person name="Rajandream M.A."/>
            <person name="Rutherford K.M."/>
            <person name="Rutter S."/>
            <person name="Seeger K."/>
            <person name="Simon S."/>
            <person name="Simmonds M."/>
            <person name="Skelton J."/>
            <person name="Squares R."/>
            <person name="Squares S."/>
            <person name="Stevens K."/>
            <person name="Taylor K."/>
            <person name="Whitehead S."/>
            <person name="Woodward J.R."/>
            <person name="Barrell B.G."/>
        </authorList>
    </citation>
    <scope>NUCLEOTIDE SEQUENCE [LARGE SCALE GENOMIC DNA]</scope>
    <source>
        <strain>TN</strain>
    </source>
</reference>
<organism>
    <name type="scientific">Mycobacterium leprae (strain TN)</name>
    <dbReference type="NCBI Taxonomy" id="272631"/>
    <lineage>
        <taxon>Bacteria</taxon>
        <taxon>Bacillati</taxon>
        <taxon>Actinomycetota</taxon>
        <taxon>Actinomycetes</taxon>
        <taxon>Mycobacteriales</taxon>
        <taxon>Mycobacteriaceae</taxon>
        <taxon>Mycobacterium</taxon>
    </lineage>
</organism>
<comment type="function">
    <text evidence="1">Cell wall formation.</text>
</comment>
<comment type="catalytic activity">
    <reaction>
        <text>UDP-N-acetyl-alpha-D-muramate + NADP(+) = UDP-N-acetyl-3-O-(1-carboxyvinyl)-alpha-D-glucosamine + NADPH + H(+)</text>
        <dbReference type="Rhea" id="RHEA:12248"/>
        <dbReference type="ChEBI" id="CHEBI:15378"/>
        <dbReference type="ChEBI" id="CHEBI:57783"/>
        <dbReference type="ChEBI" id="CHEBI:58349"/>
        <dbReference type="ChEBI" id="CHEBI:68483"/>
        <dbReference type="ChEBI" id="CHEBI:70757"/>
        <dbReference type="EC" id="1.3.1.98"/>
    </reaction>
</comment>
<comment type="cofactor">
    <cofactor evidence="1">
        <name>FAD</name>
        <dbReference type="ChEBI" id="CHEBI:57692"/>
    </cofactor>
</comment>
<comment type="pathway">
    <text>Cell wall biogenesis; peptidoglycan biosynthesis.</text>
</comment>
<comment type="subcellular location">
    <subcellularLocation>
        <location evidence="1">Cytoplasm</location>
    </subcellularLocation>
</comment>
<comment type="similarity">
    <text evidence="2">Belongs to the MurB family.</text>
</comment>
<proteinExistence type="inferred from homology"/>